<name>QUEF_ECOLU</name>
<reference key="1">
    <citation type="journal article" date="2009" name="PLoS Genet.">
        <title>Organised genome dynamics in the Escherichia coli species results in highly diverse adaptive paths.</title>
        <authorList>
            <person name="Touchon M."/>
            <person name="Hoede C."/>
            <person name="Tenaillon O."/>
            <person name="Barbe V."/>
            <person name="Baeriswyl S."/>
            <person name="Bidet P."/>
            <person name="Bingen E."/>
            <person name="Bonacorsi S."/>
            <person name="Bouchier C."/>
            <person name="Bouvet O."/>
            <person name="Calteau A."/>
            <person name="Chiapello H."/>
            <person name="Clermont O."/>
            <person name="Cruveiller S."/>
            <person name="Danchin A."/>
            <person name="Diard M."/>
            <person name="Dossat C."/>
            <person name="Karoui M.E."/>
            <person name="Frapy E."/>
            <person name="Garry L."/>
            <person name="Ghigo J.M."/>
            <person name="Gilles A.M."/>
            <person name="Johnson J."/>
            <person name="Le Bouguenec C."/>
            <person name="Lescat M."/>
            <person name="Mangenot S."/>
            <person name="Martinez-Jehanne V."/>
            <person name="Matic I."/>
            <person name="Nassif X."/>
            <person name="Oztas S."/>
            <person name="Petit M.A."/>
            <person name="Pichon C."/>
            <person name="Rouy Z."/>
            <person name="Ruf C.S."/>
            <person name="Schneider D."/>
            <person name="Tourret J."/>
            <person name="Vacherie B."/>
            <person name="Vallenet D."/>
            <person name="Medigue C."/>
            <person name="Rocha E.P.C."/>
            <person name="Denamur E."/>
        </authorList>
    </citation>
    <scope>NUCLEOTIDE SEQUENCE [LARGE SCALE GENOMIC DNA]</scope>
    <source>
        <strain>UMN026 / ExPEC</strain>
    </source>
</reference>
<dbReference type="EC" id="1.7.1.13" evidence="1"/>
<dbReference type="EMBL" id="CU928163">
    <property type="protein sequence ID" value="CAR14289.1"/>
    <property type="molecule type" value="Genomic_DNA"/>
</dbReference>
<dbReference type="RefSeq" id="WP_000100441.1">
    <property type="nucleotide sequence ID" value="NC_011751.1"/>
</dbReference>
<dbReference type="RefSeq" id="YP_002413809.1">
    <property type="nucleotide sequence ID" value="NC_011751.1"/>
</dbReference>
<dbReference type="SMR" id="B7N728"/>
<dbReference type="STRING" id="585056.ECUMN_3123"/>
<dbReference type="KEGG" id="eum:ECUMN_3123"/>
<dbReference type="PATRIC" id="fig|585056.7.peg.3303"/>
<dbReference type="HOGENOM" id="CLU_054738_0_0_6"/>
<dbReference type="UniPathway" id="UPA00392"/>
<dbReference type="Proteomes" id="UP000007097">
    <property type="component" value="Chromosome"/>
</dbReference>
<dbReference type="GO" id="GO:0005737">
    <property type="term" value="C:cytoplasm"/>
    <property type="evidence" value="ECO:0007669"/>
    <property type="project" value="UniProtKB-SubCell"/>
</dbReference>
<dbReference type="GO" id="GO:0033739">
    <property type="term" value="F:preQ1 synthase activity"/>
    <property type="evidence" value="ECO:0007669"/>
    <property type="project" value="UniProtKB-UniRule"/>
</dbReference>
<dbReference type="GO" id="GO:0008616">
    <property type="term" value="P:queuosine biosynthetic process"/>
    <property type="evidence" value="ECO:0007669"/>
    <property type="project" value="UniProtKB-UniRule"/>
</dbReference>
<dbReference type="GO" id="GO:0006400">
    <property type="term" value="P:tRNA modification"/>
    <property type="evidence" value="ECO:0007669"/>
    <property type="project" value="UniProtKB-UniRule"/>
</dbReference>
<dbReference type="FunFam" id="3.30.1130.10:FF:000004">
    <property type="entry name" value="NADPH-dependent 7-cyano-7-deazaguanine reductase"/>
    <property type="match status" value="1"/>
</dbReference>
<dbReference type="FunFam" id="3.30.1130.10:FF:000006">
    <property type="entry name" value="NADPH-dependent 7-cyano-7-deazaguanine reductase"/>
    <property type="match status" value="1"/>
</dbReference>
<dbReference type="Gene3D" id="3.30.1130.10">
    <property type="match status" value="2"/>
</dbReference>
<dbReference type="HAMAP" id="MF_00817">
    <property type="entry name" value="QueF_type2"/>
    <property type="match status" value="1"/>
</dbReference>
<dbReference type="InterPro" id="IPR043133">
    <property type="entry name" value="GTP-CH-I_C/QueF"/>
</dbReference>
<dbReference type="InterPro" id="IPR050084">
    <property type="entry name" value="NADPH_dep_7-cyano-7-deazaG_red"/>
</dbReference>
<dbReference type="InterPro" id="IPR029500">
    <property type="entry name" value="QueF"/>
</dbReference>
<dbReference type="InterPro" id="IPR029139">
    <property type="entry name" value="QueF_N"/>
</dbReference>
<dbReference type="InterPro" id="IPR016428">
    <property type="entry name" value="QueF_type2"/>
</dbReference>
<dbReference type="NCBIfam" id="TIGR03138">
    <property type="entry name" value="QueF"/>
    <property type="match status" value="1"/>
</dbReference>
<dbReference type="PANTHER" id="PTHR34354">
    <property type="entry name" value="NADPH-DEPENDENT 7-CYANO-7-DEAZAGUANINE REDUCTASE"/>
    <property type="match status" value="1"/>
</dbReference>
<dbReference type="PANTHER" id="PTHR34354:SF1">
    <property type="entry name" value="NADPH-DEPENDENT 7-CYANO-7-DEAZAGUANINE REDUCTASE"/>
    <property type="match status" value="1"/>
</dbReference>
<dbReference type="Pfam" id="PF14489">
    <property type="entry name" value="QueF"/>
    <property type="match status" value="1"/>
</dbReference>
<dbReference type="Pfam" id="PF14819">
    <property type="entry name" value="QueF_N"/>
    <property type="match status" value="1"/>
</dbReference>
<dbReference type="PIRSF" id="PIRSF004750">
    <property type="entry name" value="Nitrile_oxidored_YqcD_prd"/>
    <property type="match status" value="1"/>
</dbReference>
<dbReference type="SUPFAM" id="SSF55620">
    <property type="entry name" value="Tetrahydrobiopterin biosynthesis enzymes-like"/>
    <property type="match status" value="1"/>
</dbReference>
<feature type="chain" id="PRO_1000213064" description="NADPH-dependent 7-cyano-7-deazaguanine reductase">
    <location>
        <begin position="1"/>
        <end position="282"/>
    </location>
</feature>
<feature type="active site" description="Thioimide intermediate" evidence="1">
    <location>
        <position position="190"/>
    </location>
</feature>
<feature type="active site" description="Proton donor" evidence="1">
    <location>
        <position position="197"/>
    </location>
</feature>
<feature type="binding site" evidence="1">
    <location>
        <begin position="88"/>
        <end position="90"/>
    </location>
    <ligand>
        <name>substrate</name>
    </ligand>
</feature>
<feature type="binding site" evidence="1">
    <location>
        <begin position="90"/>
        <end position="91"/>
    </location>
    <ligand>
        <name>NADPH</name>
        <dbReference type="ChEBI" id="CHEBI:57783"/>
    </ligand>
</feature>
<feature type="binding site" evidence="1">
    <location>
        <begin position="229"/>
        <end position="230"/>
    </location>
    <ligand>
        <name>substrate</name>
    </ligand>
</feature>
<feature type="binding site" evidence="1">
    <location>
        <begin position="258"/>
        <end position="259"/>
    </location>
    <ligand>
        <name>NADPH</name>
        <dbReference type="ChEBI" id="CHEBI:57783"/>
    </ligand>
</feature>
<accession>B7N728</accession>
<keyword id="KW-0963">Cytoplasm</keyword>
<keyword id="KW-0521">NADP</keyword>
<keyword id="KW-0560">Oxidoreductase</keyword>
<keyword id="KW-0671">Queuosine biosynthesis</keyword>
<sequence length="282" mass="32557">MSSYANHQVLAGLTLGKSTDYRDTYDASLLQGVPRSLNRDPLGLKADNLPFHGTDIWTLYELSWLNAKGLPQVAVGHVELDYTSANLIESKSFKLYLNSFNQTRFNNWDEVRQTLERDLSTCAQGKVSVALYRLDELEGQPIGHFNGTCIDDQDITIDNYEFTTDYLENATSGEKVVEETLVSHLLKSNCLITHQPDWGSIQIQYRGRQIDREKLLRYLVSFRHHNEFHEQCVERIFNDLLRFCQPEKLSVYARYTRRGGLDINPWRSNSDFVPSTTRLVRQ</sequence>
<organism>
    <name type="scientific">Escherichia coli O17:K52:H18 (strain UMN026 / ExPEC)</name>
    <dbReference type="NCBI Taxonomy" id="585056"/>
    <lineage>
        <taxon>Bacteria</taxon>
        <taxon>Pseudomonadati</taxon>
        <taxon>Pseudomonadota</taxon>
        <taxon>Gammaproteobacteria</taxon>
        <taxon>Enterobacterales</taxon>
        <taxon>Enterobacteriaceae</taxon>
        <taxon>Escherichia</taxon>
    </lineage>
</organism>
<comment type="function">
    <text evidence="1">Catalyzes the NADPH-dependent reduction of 7-cyano-7-deazaguanine (preQ0) to 7-aminomethyl-7-deazaguanine (preQ1).</text>
</comment>
<comment type="catalytic activity">
    <reaction evidence="1">
        <text>7-aminomethyl-7-carbaguanine + 2 NADP(+) = 7-cyano-7-deazaguanine + 2 NADPH + 3 H(+)</text>
        <dbReference type="Rhea" id="RHEA:13409"/>
        <dbReference type="ChEBI" id="CHEBI:15378"/>
        <dbReference type="ChEBI" id="CHEBI:45075"/>
        <dbReference type="ChEBI" id="CHEBI:57783"/>
        <dbReference type="ChEBI" id="CHEBI:58349"/>
        <dbReference type="ChEBI" id="CHEBI:58703"/>
        <dbReference type="EC" id="1.7.1.13"/>
    </reaction>
</comment>
<comment type="pathway">
    <text evidence="1">tRNA modification; tRNA-queuosine biosynthesis.</text>
</comment>
<comment type="subunit">
    <text evidence="1">Homodimer.</text>
</comment>
<comment type="subcellular location">
    <subcellularLocation>
        <location evidence="1">Cytoplasm</location>
    </subcellularLocation>
</comment>
<comment type="similarity">
    <text evidence="1">Belongs to the GTP cyclohydrolase I family. QueF type 2 subfamily.</text>
</comment>
<evidence type="ECO:0000255" key="1">
    <source>
        <dbReference type="HAMAP-Rule" id="MF_00817"/>
    </source>
</evidence>
<gene>
    <name evidence="1" type="primary">queF</name>
    <name type="ordered locus">ECUMN_3123</name>
</gene>
<proteinExistence type="inferred from homology"/>
<protein>
    <recommendedName>
        <fullName evidence="1">NADPH-dependent 7-cyano-7-deazaguanine reductase</fullName>
        <ecNumber evidence="1">1.7.1.13</ecNumber>
    </recommendedName>
    <alternativeName>
        <fullName evidence="1">7-cyano-7-carbaguanine reductase</fullName>
    </alternativeName>
    <alternativeName>
        <fullName evidence="1">NADPH-dependent nitrile oxidoreductase</fullName>
    </alternativeName>
    <alternativeName>
        <fullName evidence="1">PreQ(0) reductase</fullName>
    </alternativeName>
</protein>